<reference key="1">
    <citation type="journal article" date="2006" name="J. Bacteriol.">
        <title>Pathogenomic sequence analysis of Bacillus cereus and Bacillus thuringiensis isolates closely related to Bacillus anthracis.</title>
        <authorList>
            <person name="Han C.S."/>
            <person name="Xie G."/>
            <person name="Challacombe J.F."/>
            <person name="Altherr M.R."/>
            <person name="Bhotika S.S."/>
            <person name="Bruce D."/>
            <person name="Campbell C.S."/>
            <person name="Campbell M.L."/>
            <person name="Chen J."/>
            <person name="Chertkov O."/>
            <person name="Cleland C."/>
            <person name="Dimitrijevic M."/>
            <person name="Doggett N.A."/>
            <person name="Fawcett J.J."/>
            <person name="Glavina T."/>
            <person name="Goodwin L.A."/>
            <person name="Hill K.K."/>
            <person name="Hitchcock P."/>
            <person name="Jackson P.J."/>
            <person name="Keim P."/>
            <person name="Kewalramani A.R."/>
            <person name="Longmire J."/>
            <person name="Lucas S."/>
            <person name="Malfatti S."/>
            <person name="McMurry K."/>
            <person name="Meincke L.J."/>
            <person name="Misra M."/>
            <person name="Moseman B.L."/>
            <person name="Mundt M."/>
            <person name="Munk A.C."/>
            <person name="Okinaka R.T."/>
            <person name="Parson-Quintana B."/>
            <person name="Reilly L.P."/>
            <person name="Richardson P."/>
            <person name="Robinson D.L."/>
            <person name="Rubin E."/>
            <person name="Saunders E."/>
            <person name="Tapia R."/>
            <person name="Tesmer J.G."/>
            <person name="Thayer N."/>
            <person name="Thompson L.S."/>
            <person name="Tice H."/>
            <person name="Ticknor L.O."/>
            <person name="Wills P.L."/>
            <person name="Brettin T.S."/>
            <person name="Gilna P."/>
        </authorList>
    </citation>
    <scope>NUCLEOTIDE SEQUENCE [LARGE SCALE GENOMIC DNA]</scope>
    <source>
        <strain>ZK / E33L</strain>
    </source>
</reference>
<feature type="chain" id="PRO_1000054068" description="Cyclic pyranopterin monophosphate synthase">
    <location>
        <begin position="1"/>
        <end position="161"/>
    </location>
</feature>
<feature type="active site" evidence="1">
    <location>
        <position position="130"/>
    </location>
</feature>
<feature type="binding site" evidence="1">
    <location>
        <begin position="75"/>
        <end position="77"/>
    </location>
    <ligand>
        <name>substrate</name>
    </ligand>
</feature>
<feature type="binding site" evidence="1">
    <location>
        <begin position="115"/>
        <end position="116"/>
    </location>
    <ligand>
        <name>substrate</name>
    </ligand>
</feature>
<proteinExistence type="inferred from homology"/>
<dbReference type="EC" id="4.6.1.17" evidence="1"/>
<dbReference type="EMBL" id="CP000001">
    <property type="protein sequence ID" value="AAU15798.1"/>
    <property type="molecule type" value="Genomic_DNA"/>
</dbReference>
<dbReference type="RefSeq" id="WP_000094141.1">
    <property type="nucleotide sequence ID" value="NZ_CP009968.1"/>
</dbReference>
<dbReference type="SMR" id="Q632W7"/>
<dbReference type="GeneID" id="45024593"/>
<dbReference type="KEGG" id="bcz:BCE33L4473"/>
<dbReference type="PATRIC" id="fig|288681.22.peg.895"/>
<dbReference type="UniPathway" id="UPA00344"/>
<dbReference type="Proteomes" id="UP000002612">
    <property type="component" value="Chromosome"/>
</dbReference>
<dbReference type="GO" id="GO:0061799">
    <property type="term" value="F:cyclic pyranopterin monophosphate synthase activity"/>
    <property type="evidence" value="ECO:0007669"/>
    <property type="project" value="UniProtKB-UniRule"/>
</dbReference>
<dbReference type="GO" id="GO:0006777">
    <property type="term" value="P:Mo-molybdopterin cofactor biosynthetic process"/>
    <property type="evidence" value="ECO:0007669"/>
    <property type="project" value="UniProtKB-UniRule"/>
</dbReference>
<dbReference type="CDD" id="cd01420">
    <property type="entry name" value="MoaC_PE"/>
    <property type="match status" value="1"/>
</dbReference>
<dbReference type="Gene3D" id="3.30.70.640">
    <property type="entry name" value="Molybdopterin cofactor biosynthesis C (MoaC) domain"/>
    <property type="match status" value="1"/>
</dbReference>
<dbReference type="HAMAP" id="MF_01224_B">
    <property type="entry name" value="MoaC_B"/>
    <property type="match status" value="1"/>
</dbReference>
<dbReference type="InterPro" id="IPR023045">
    <property type="entry name" value="MoaC"/>
</dbReference>
<dbReference type="InterPro" id="IPR047594">
    <property type="entry name" value="MoaC_bact/euk"/>
</dbReference>
<dbReference type="InterPro" id="IPR036522">
    <property type="entry name" value="MoaC_sf"/>
</dbReference>
<dbReference type="InterPro" id="IPR050105">
    <property type="entry name" value="MoCo_biosynth_MoaA/MoaC"/>
</dbReference>
<dbReference type="InterPro" id="IPR002820">
    <property type="entry name" value="Mopterin_CF_biosynth-C_dom"/>
</dbReference>
<dbReference type="NCBIfam" id="TIGR00581">
    <property type="entry name" value="moaC"/>
    <property type="match status" value="1"/>
</dbReference>
<dbReference type="NCBIfam" id="NF006870">
    <property type="entry name" value="PRK09364.1"/>
    <property type="match status" value="1"/>
</dbReference>
<dbReference type="PANTHER" id="PTHR22960:SF29">
    <property type="entry name" value="CYCLIC PYRANOPTERIN MONOPHOSPHATE SYNTHASE"/>
    <property type="match status" value="1"/>
</dbReference>
<dbReference type="PANTHER" id="PTHR22960">
    <property type="entry name" value="MOLYBDOPTERIN COFACTOR SYNTHESIS PROTEIN A"/>
    <property type="match status" value="1"/>
</dbReference>
<dbReference type="Pfam" id="PF01967">
    <property type="entry name" value="MoaC"/>
    <property type="match status" value="1"/>
</dbReference>
<dbReference type="SUPFAM" id="SSF55040">
    <property type="entry name" value="Molybdenum cofactor biosynthesis protein C, MoaC"/>
    <property type="match status" value="1"/>
</dbReference>
<protein>
    <recommendedName>
        <fullName evidence="1">Cyclic pyranopterin monophosphate synthase</fullName>
        <ecNumber evidence="1">4.6.1.17</ecNumber>
    </recommendedName>
    <alternativeName>
        <fullName evidence="1">Molybdenum cofactor biosynthesis protein C</fullName>
    </alternativeName>
</protein>
<comment type="function">
    <text evidence="1">Catalyzes the conversion of (8S)-3',8-cyclo-7,8-dihydroguanosine 5'-triphosphate to cyclic pyranopterin monophosphate (cPMP).</text>
</comment>
<comment type="catalytic activity">
    <reaction evidence="1">
        <text>(8S)-3',8-cyclo-7,8-dihydroguanosine 5'-triphosphate = cyclic pyranopterin phosphate + diphosphate</text>
        <dbReference type="Rhea" id="RHEA:49580"/>
        <dbReference type="ChEBI" id="CHEBI:33019"/>
        <dbReference type="ChEBI" id="CHEBI:59648"/>
        <dbReference type="ChEBI" id="CHEBI:131766"/>
        <dbReference type="EC" id="4.6.1.17"/>
    </reaction>
</comment>
<comment type="pathway">
    <text evidence="1">Cofactor biosynthesis; molybdopterin biosynthesis.</text>
</comment>
<comment type="subunit">
    <text evidence="1">Homohexamer; trimer of dimers.</text>
</comment>
<comment type="similarity">
    <text evidence="1">Belongs to the MoaC family.</text>
</comment>
<organism>
    <name type="scientific">Bacillus cereus (strain ZK / E33L)</name>
    <dbReference type="NCBI Taxonomy" id="288681"/>
    <lineage>
        <taxon>Bacteria</taxon>
        <taxon>Bacillati</taxon>
        <taxon>Bacillota</taxon>
        <taxon>Bacilli</taxon>
        <taxon>Bacillales</taxon>
        <taxon>Bacillaceae</taxon>
        <taxon>Bacillus</taxon>
        <taxon>Bacillus cereus group</taxon>
    </lineage>
</organism>
<keyword id="KW-0456">Lyase</keyword>
<keyword id="KW-0501">Molybdenum cofactor biosynthesis</keyword>
<name>MOAC_BACCZ</name>
<sequence length="161" mass="17499">MSSFTHFNDQGRAKMVDISDKKATVRTAIACSSIVVTKEIYDKISHNEIGKGDVLAVAQIAGIMAAKRTSDIIPMCHPLLLKGVDVSFDWKQSDEQYRLLIEVKVKTEGSTGVEMEALTAASATALTVYDMCKAVDKGMIIGETYLLEKTGGKSGDYTRKS</sequence>
<evidence type="ECO:0000255" key="1">
    <source>
        <dbReference type="HAMAP-Rule" id="MF_01224"/>
    </source>
</evidence>
<gene>
    <name evidence="1" type="primary">moaC</name>
    <name type="ordered locus">BCE33L4473</name>
</gene>
<accession>Q632W7</accession>